<reference key="1">
    <citation type="journal article" date="2007" name="Nature">
        <title>Evolution of genes and genomes on the Drosophila phylogeny.</title>
        <authorList>
            <consortium name="Drosophila 12 genomes consortium"/>
        </authorList>
    </citation>
    <scope>NUCLEOTIDE SEQUENCE [LARGE SCALE GENOMIC DNA]</scope>
    <source>
        <strain>Tucson 14024-0371.13</strain>
    </source>
</reference>
<accession>B3M4D9</accession>
<sequence>MAQFDLTRINCQYLDRHLTFPLLEFLCGKEIYNQQELLEYILETVNKTNMIDYTMDTRKRLNLSQEMPEELVQRKAEVLATLKQLQNEVAPIMKATDILKNGESMKDSKTFVNALQKDYNFKVEHLESAYKLAKYLYECGNYQESTSYLYFCLIVMSPNDKNYLNVLWGKLAAEILTLNWNTALEDLTRLRDYIDSANFSTIQALQQRTWLIHWSVLVFFNHPKGRDLIIEMFLYKPLYLNAIQTMCPHIMRYLATAVVINRTRRNALKDLIKVIQQESYTYRDPITEFLECLYVNFDFEGARLKLHECQTVILNDFFIVACLNEFVEDARLMIFETFCRIHQCITISMLADKLNMKPNEAECWIVNLIRNARLNAKIDSKLGHVVMGTQPLSPYQQLVEKIDSLSMRSEHLAGLIERKSKQKNQESIDSWKYY</sequence>
<feature type="chain" id="PRO_0000365963" description="Eukaryotic translation initiation factor 3 subunit E">
    <location>
        <begin position="1"/>
        <end position="434"/>
    </location>
</feature>
<feature type="domain" description="PCI" evidence="3">
    <location>
        <begin position="219"/>
        <end position="392"/>
    </location>
</feature>
<organism>
    <name type="scientific">Drosophila ananassae</name>
    <name type="common">Fruit fly</name>
    <dbReference type="NCBI Taxonomy" id="7217"/>
    <lineage>
        <taxon>Eukaryota</taxon>
        <taxon>Metazoa</taxon>
        <taxon>Ecdysozoa</taxon>
        <taxon>Arthropoda</taxon>
        <taxon>Hexapoda</taxon>
        <taxon>Insecta</taxon>
        <taxon>Pterygota</taxon>
        <taxon>Neoptera</taxon>
        <taxon>Endopterygota</taxon>
        <taxon>Diptera</taxon>
        <taxon>Brachycera</taxon>
        <taxon>Muscomorpha</taxon>
        <taxon>Ephydroidea</taxon>
        <taxon>Drosophilidae</taxon>
        <taxon>Drosophila</taxon>
        <taxon>Sophophora</taxon>
    </lineage>
</organism>
<name>EIF3E_DROAN</name>
<evidence type="ECO:0000250" key="1">
    <source>
        <dbReference type="UniProtKB" id="O77410"/>
    </source>
</evidence>
<evidence type="ECO:0000255" key="2">
    <source>
        <dbReference type="HAMAP-Rule" id="MF_03004"/>
    </source>
</evidence>
<evidence type="ECO:0000255" key="3">
    <source>
        <dbReference type="PROSITE-ProRule" id="PRU01185"/>
    </source>
</evidence>
<keyword id="KW-0963">Cytoplasm</keyword>
<keyword id="KW-0396">Initiation factor</keyword>
<keyword id="KW-0648">Protein biosynthesis</keyword>
<keyword id="KW-1185">Reference proteome</keyword>
<gene>
    <name type="primary">eIF3-S6</name>
    <name type="synonym">Int6</name>
    <name type="ORF">GF10503</name>
</gene>
<proteinExistence type="inferred from homology"/>
<protein>
    <recommendedName>
        <fullName evidence="2">Eukaryotic translation initiation factor 3 subunit E</fullName>
        <shortName evidence="2">eIF3e</shortName>
    </recommendedName>
    <alternativeName>
        <fullName evidence="2">Eukaryotic translation initiation factor 3 subunit 6</fullName>
    </alternativeName>
</protein>
<comment type="function">
    <text evidence="2">Component of the eukaryotic translation initiation factor 3 (eIF-3) complex, which is involved in protein synthesis of a specialized repertoire of mRNAs and, together with other initiation factors, stimulates binding of mRNA and methionyl-tRNAi to the 40S ribosome. The eIF-3 complex specifically targets and initiates translation of a subset of mRNAs involved in cell proliferation.</text>
</comment>
<comment type="subunit">
    <text evidence="1 2">Component of the eukaryotic translation initiation factor 3 (eIF-3) complex. The eIF-3 complex interacts with pix. Interacts with mxt (By similarity).</text>
</comment>
<comment type="subcellular location">
    <subcellularLocation>
        <location evidence="2">Cytoplasm</location>
    </subcellularLocation>
</comment>
<comment type="similarity">
    <text evidence="2">Belongs to the eIF-3 subunit E family.</text>
</comment>
<dbReference type="EMBL" id="CH902618">
    <property type="protein sequence ID" value="EDV40433.1"/>
    <property type="molecule type" value="Genomic_DNA"/>
</dbReference>
<dbReference type="SMR" id="B3M4D9"/>
<dbReference type="FunCoup" id="B3M4D9">
    <property type="interactions" value="2554"/>
</dbReference>
<dbReference type="STRING" id="7217.B3M4D9"/>
<dbReference type="EnsemblMetazoa" id="FBtr0115203">
    <property type="protein sequence ID" value="FBpp0113695"/>
    <property type="gene ID" value="FBgn0087544"/>
</dbReference>
<dbReference type="EnsemblMetazoa" id="XM_001957591.4">
    <property type="protein sequence ID" value="XP_001957627.1"/>
    <property type="gene ID" value="LOC6493373"/>
</dbReference>
<dbReference type="GeneID" id="6493373"/>
<dbReference type="KEGG" id="dan:6493373"/>
<dbReference type="CTD" id="3646"/>
<dbReference type="eggNOG" id="KOG2758">
    <property type="taxonomic scope" value="Eukaryota"/>
</dbReference>
<dbReference type="HOGENOM" id="CLU_031132_0_0_1"/>
<dbReference type="InParanoid" id="B3M4D9"/>
<dbReference type="OMA" id="NCPWILR"/>
<dbReference type="OrthoDB" id="417252at2759"/>
<dbReference type="PhylomeDB" id="B3M4D9"/>
<dbReference type="Proteomes" id="UP000007801">
    <property type="component" value="Unassembled WGS sequence"/>
</dbReference>
<dbReference type="GO" id="GO:0016282">
    <property type="term" value="C:eukaryotic 43S preinitiation complex"/>
    <property type="evidence" value="ECO:0007669"/>
    <property type="project" value="UniProtKB-UniRule"/>
</dbReference>
<dbReference type="GO" id="GO:0033290">
    <property type="term" value="C:eukaryotic 48S preinitiation complex"/>
    <property type="evidence" value="ECO:0007669"/>
    <property type="project" value="UniProtKB-UniRule"/>
</dbReference>
<dbReference type="GO" id="GO:0071540">
    <property type="term" value="C:eukaryotic translation initiation factor 3 complex, eIF3e"/>
    <property type="evidence" value="ECO:0007669"/>
    <property type="project" value="UniProtKB-UniRule"/>
</dbReference>
<dbReference type="GO" id="GO:0043231">
    <property type="term" value="C:intracellular membrane-bounded organelle"/>
    <property type="evidence" value="ECO:0007669"/>
    <property type="project" value="EnsemblMetazoa"/>
</dbReference>
<dbReference type="GO" id="GO:0003743">
    <property type="term" value="F:translation initiation factor activity"/>
    <property type="evidence" value="ECO:0007669"/>
    <property type="project" value="UniProtKB-UniRule"/>
</dbReference>
<dbReference type="GO" id="GO:0001732">
    <property type="term" value="P:formation of cytoplasmic translation initiation complex"/>
    <property type="evidence" value="ECO:0007669"/>
    <property type="project" value="UniProtKB-UniRule"/>
</dbReference>
<dbReference type="CDD" id="cd21378">
    <property type="entry name" value="eIF3E"/>
    <property type="match status" value="1"/>
</dbReference>
<dbReference type="HAMAP" id="MF_03004">
    <property type="entry name" value="eIF3e"/>
    <property type="match status" value="1"/>
</dbReference>
<dbReference type="InterPro" id="IPR016650">
    <property type="entry name" value="eIF3e"/>
</dbReference>
<dbReference type="InterPro" id="IPR019010">
    <property type="entry name" value="eIF3e_N"/>
</dbReference>
<dbReference type="InterPro" id="IPR000717">
    <property type="entry name" value="PCI_dom"/>
</dbReference>
<dbReference type="InterPro" id="IPR036390">
    <property type="entry name" value="WH_DNA-bd_sf"/>
</dbReference>
<dbReference type="PANTHER" id="PTHR10317">
    <property type="entry name" value="EUKARYOTIC TRANSLATION INITIATION FACTOR 3 SUBUNIT E"/>
    <property type="match status" value="1"/>
</dbReference>
<dbReference type="Pfam" id="PF09440">
    <property type="entry name" value="eIF3_N"/>
    <property type="match status" value="1"/>
</dbReference>
<dbReference type="Pfam" id="PF01399">
    <property type="entry name" value="PCI"/>
    <property type="match status" value="1"/>
</dbReference>
<dbReference type="PIRSF" id="PIRSF016255">
    <property type="entry name" value="eIF3e_su6"/>
    <property type="match status" value="1"/>
</dbReference>
<dbReference type="SMART" id="SM01186">
    <property type="entry name" value="eIF3_N"/>
    <property type="match status" value="1"/>
</dbReference>
<dbReference type="SMART" id="SM00088">
    <property type="entry name" value="PINT"/>
    <property type="match status" value="1"/>
</dbReference>
<dbReference type="SUPFAM" id="SSF46785">
    <property type="entry name" value="Winged helix' DNA-binding domain"/>
    <property type="match status" value="1"/>
</dbReference>
<dbReference type="PROSITE" id="PS50250">
    <property type="entry name" value="PCI"/>
    <property type="match status" value="1"/>
</dbReference>